<protein>
    <recommendedName>
        <fullName evidence="1">Chaperonin GroEL</fullName>
        <ecNumber evidence="1">5.6.1.7</ecNumber>
    </recommendedName>
    <alternativeName>
        <fullName evidence="1">60 kDa chaperonin</fullName>
    </alternativeName>
    <alternativeName>
        <fullName evidence="1">Chaperonin-60</fullName>
        <shortName evidence="1">Cpn60</shortName>
    </alternativeName>
</protein>
<reference key="1">
    <citation type="journal article" date="2008" name="J. Bacteriol.">
        <title>Insights into plant cell wall degradation from the genome sequence of the soil bacterium Cellvibrio japonicus.</title>
        <authorList>
            <person name="DeBoy R.T."/>
            <person name="Mongodin E.F."/>
            <person name="Fouts D.E."/>
            <person name="Tailford L.E."/>
            <person name="Khouri H."/>
            <person name="Emerson J.B."/>
            <person name="Mohamoud Y."/>
            <person name="Watkins K."/>
            <person name="Henrissat B."/>
            <person name="Gilbert H.J."/>
            <person name="Nelson K.E."/>
        </authorList>
    </citation>
    <scope>NUCLEOTIDE SEQUENCE [LARGE SCALE GENOMIC DNA]</scope>
    <source>
        <strain>Ueda107</strain>
    </source>
</reference>
<feature type="chain" id="PRO_1000129985" description="Chaperonin GroEL">
    <location>
        <begin position="1"/>
        <end position="545"/>
    </location>
</feature>
<feature type="binding site" evidence="1">
    <location>
        <begin position="30"/>
        <end position="33"/>
    </location>
    <ligand>
        <name>ATP</name>
        <dbReference type="ChEBI" id="CHEBI:30616"/>
    </ligand>
</feature>
<feature type="binding site" evidence="1">
    <location>
        <position position="51"/>
    </location>
    <ligand>
        <name>ATP</name>
        <dbReference type="ChEBI" id="CHEBI:30616"/>
    </ligand>
</feature>
<feature type="binding site" evidence="1">
    <location>
        <begin position="87"/>
        <end position="91"/>
    </location>
    <ligand>
        <name>ATP</name>
        <dbReference type="ChEBI" id="CHEBI:30616"/>
    </ligand>
</feature>
<feature type="binding site" evidence="1">
    <location>
        <position position="415"/>
    </location>
    <ligand>
        <name>ATP</name>
        <dbReference type="ChEBI" id="CHEBI:30616"/>
    </ligand>
</feature>
<feature type="binding site" evidence="1">
    <location>
        <begin position="479"/>
        <end position="481"/>
    </location>
    <ligand>
        <name>ATP</name>
        <dbReference type="ChEBI" id="CHEBI:30616"/>
    </ligand>
</feature>
<feature type="binding site" evidence="1">
    <location>
        <position position="495"/>
    </location>
    <ligand>
        <name>ATP</name>
        <dbReference type="ChEBI" id="CHEBI:30616"/>
    </ligand>
</feature>
<dbReference type="EC" id="5.6.1.7" evidence="1"/>
<dbReference type="EMBL" id="CP000934">
    <property type="protein sequence ID" value="ACE83163.1"/>
    <property type="molecule type" value="Genomic_DNA"/>
</dbReference>
<dbReference type="RefSeq" id="WP_012488241.1">
    <property type="nucleotide sequence ID" value="NC_010995.1"/>
</dbReference>
<dbReference type="SMR" id="B3PLM6"/>
<dbReference type="STRING" id="498211.CJA_2646"/>
<dbReference type="KEGG" id="cja:CJA_2646"/>
<dbReference type="eggNOG" id="COG0459">
    <property type="taxonomic scope" value="Bacteria"/>
</dbReference>
<dbReference type="HOGENOM" id="CLU_016503_3_0_6"/>
<dbReference type="OrthoDB" id="9766614at2"/>
<dbReference type="Proteomes" id="UP000001036">
    <property type="component" value="Chromosome"/>
</dbReference>
<dbReference type="GO" id="GO:0005737">
    <property type="term" value="C:cytoplasm"/>
    <property type="evidence" value="ECO:0007669"/>
    <property type="project" value="UniProtKB-SubCell"/>
</dbReference>
<dbReference type="GO" id="GO:0005524">
    <property type="term" value="F:ATP binding"/>
    <property type="evidence" value="ECO:0007669"/>
    <property type="project" value="UniProtKB-UniRule"/>
</dbReference>
<dbReference type="GO" id="GO:0140662">
    <property type="term" value="F:ATP-dependent protein folding chaperone"/>
    <property type="evidence" value="ECO:0007669"/>
    <property type="project" value="InterPro"/>
</dbReference>
<dbReference type="GO" id="GO:0016853">
    <property type="term" value="F:isomerase activity"/>
    <property type="evidence" value="ECO:0007669"/>
    <property type="project" value="UniProtKB-KW"/>
</dbReference>
<dbReference type="GO" id="GO:0051082">
    <property type="term" value="F:unfolded protein binding"/>
    <property type="evidence" value="ECO:0007669"/>
    <property type="project" value="UniProtKB-UniRule"/>
</dbReference>
<dbReference type="GO" id="GO:0042026">
    <property type="term" value="P:protein refolding"/>
    <property type="evidence" value="ECO:0007669"/>
    <property type="project" value="UniProtKB-UniRule"/>
</dbReference>
<dbReference type="CDD" id="cd03344">
    <property type="entry name" value="GroEL"/>
    <property type="match status" value="1"/>
</dbReference>
<dbReference type="FunFam" id="1.10.560.10:FF:000001">
    <property type="entry name" value="60 kDa chaperonin"/>
    <property type="match status" value="1"/>
</dbReference>
<dbReference type="FunFam" id="3.50.7.10:FF:000001">
    <property type="entry name" value="60 kDa chaperonin"/>
    <property type="match status" value="1"/>
</dbReference>
<dbReference type="Gene3D" id="3.50.7.10">
    <property type="entry name" value="GroEL"/>
    <property type="match status" value="1"/>
</dbReference>
<dbReference type="Gene3D" id="1.10.560.10">
    <property type="entry name" value="GroEL-like equatorial domain"/>
    <property type="match status" value="1"/>
</dbReference>
<dbReference type="Gene3D" id="3.30.260.10">
    <property type="entry name" value="TCP-1-like chaperonin intermediate domain"/>
    <property type="match status" value="1"/>
</dbReference>
<dbReference type="HAMAP" id="MF_00600">
    <property type="entry name" value="CH60"/>
    <property type="match status" value="1"/>
</dbReference>
<dbReference type="InterPro" id="IPR018370">
    <property type="entry name" value="Chaperonin_Cpn60_CS"/>
</dbReference>
<dbReference type="InterPro" id="IPR001844">
    <property type="entry name" value="Cpn60/GroEL"/>
</dbReference>
<dbReference type="InterPro" id="IPR002423">
    <property type="entry name" value="Cpn60/GroEL/TCP-1"/>
</dbReference>
<dbReference type="InterPro" id="IPR027409">
    <property type="entry name" value="GroEL-like_apical_dom_sf"/>
</dbReference>
<dbReference type="InterPro" id="IPR027413">
    <property type="entry name" value="GROEL-like_equatorial_sf"/>
</dbReference>
<dbReference type="InterPro" id="IPR027410">
    <property type="entry name" value="TCP-1-like_intermed_sf"/>
</dbReference>
<dbReference type="NCBIfam" id="TIGR02348">
    <property type="entry name" value="GroEL"/>
    <property type="match status" value="1"/>
</dbReference>
<dbReference type="NCBIfam" id="NF000592">
    <property type="entry name" value="PRK00013.1"/>
    <property type="match status" value="1"/>
</dbReference>
<dbReference type="NCBIfam" id="NF009487">
    <property type="entry name" value="PRK12849.1"/>
    <property type="match status" value="1"/>
</dbReference>
<dbReference type="NCBIfam" id="NF009488">
    <property type="entry name" value="PRK12850.1"/>
    <property type="match status" value="1"/>
</dbReference>
<dbReference type="NCBIfam" id="NF009489">
    <property type="entry name" value="PRK12851.1"/>
    <property type="match status" value="1"/>
</dbReference>
<dbReference type="PANTHER" id="PTHR45633">
    <property type="entry name" value="60 KDA HEAT SHOCK PROTEIN, MITOCHONDRIAL"/>
    <property type="match status" value="1"/>
</dbReference>
<dbReference type="Pfam" id="PF00118">
    <property type="entry name" value="Cpn60_TCP1"/>
    <property type="match status" value="1"/>
</dbReference>
<dbReference type="PRINTS" id="PR00298">
    <property type="entry name" value="CHAPERONIN60"/>
</dbReference>
<dbReference type="SUPFAM" id="SSF52029">
    <property type="entry name" value="GroEL apical domain-like"/>
    <property type="match status" value="1"/>
</dbReference>
<dbReference type="SUPFAM" id="SSF48592">
    <property type="entry name" value="GroEL equatorial domain-like"/>
    <property type="match status" value="1"/>
</dbReference>
<dbReference type="SUPFAM" id="SSF54849">
    <property type="entry name" value="GroEL-intermediate domain like"/>
    <property type="match status" value="1"/>
</dbReference>
<dbReference type="PROSITE" id="PS00296">
    <property type="entry name" value="CHAPERONINS_CPN60"/>
    <property type="match status" value="1"/>
</dbReference>
<keyword id="KW-0067">ATP-binding</keyword>
<keyword id="KW-0143">Chaperone</keyword>
<keyword id="KW-0963">Cytoplasm</keyword>
<keyword id="KW-0413">Isomerase</keyword>
<keyword id="KW-0547">Nucleotide-binding</keyword>
<keyword id="KW-1185">Reference proteome</keyword>
<sequence length="545" mass="56876">MAAKEVKFGDSARQRMLAGVNILADAVKATLGPKGRNVVLEKSFGAPTITKDGVSVAKEISLKDKFENMGAQMVKEVASKASDDAGDGTTTATVLAQAIVNEGLKSVAAGMNPMDLKRGIDKAIAEAVKHVQSIAVPCADSKSISQVGTISANSDSSIGNLIAEAMEKVGKEGVITVEEGTSLDNELDVVEGMQFDRGYLSPYFINNQDNMSVEHDNPFILLVDKKISNIRELLPVLEGVAKSGKPLVIVAEDVEGEALATLVVNNIRGIVKVAAVKAPGFGDRRKAMLQDIAVLTGGTVISEEVGLDLESATLEHLGTAKRVTMNKDNTTIVDGAGKAEEIKTRVQQIRVQIEETSSDYDREKLQERVAKLAGGVAVIKVGAATEVEMKEKKARVEDALHATRAAVEEGVVPGGGTALIRAVAAIADLKGDNEDQNAGIGIARRAMESPLRQIVANAGEEPSVVADSVKKGSGNFGYNAATGVYGDMIEMGILDPAKVTRTALQAAGSIAGLMITTEAMVADLPEDKPAAAPDMGGMGGMGGMM</sequence>
<comment type="function">
    <text evidence="1">Together with its co-chaperonin GroES, plays an essential role in assisting protein folding. The GroEL-GroES system forms a nano-cage that allows encapsulation of the non-native substrate proteins and provides a physical environment optimized to promote and accelerate protein folding.</text>
</comment>
<comment type="catalytic activity">
    <reaction evidence="1">
        <text>ATP + H2O + a folded polypeptide = ADP + phosphate + an unfolded polypeptide.</text>
        <dbReference type="EC" id="5.6.1.7"/>
    </reaction>
</comment>
<comment type="subunit">
    <text evidence="1">Forms a cylinder of 14 subunits composed of two heptameric rings stacked back-to-back. Interacts with the co-chaperonin GroES.</text>
</comment>
<comment type="subcellular location">
    <subcellularLocation>
        <location evidence="1">Cytoplasm</location>
    </subcellularLocation>
</comment>
<comment type="similarity">
    <text evidence="1">Belongs to the chaperonin (HSP60) family.</text>
</comment>
<proteinExistence type="inferred from homology"/>
<accession>B3PLM6</accession>
<gene>
    <name evidence="1" type="primary">groEL</name>
    <name evidence="1" type="synonym">groL</name>
    <name type="ordered locus">CJA_2646</name>
</gene>
<evidence type="ECO:0000255" key="1">
    <source>
        <dbReference type="HAMAP-Rule" id="MF_00600"/>
    </source>
</evidence>
<organism>
    <name type="scientific">Cellvibrio japonicus (strain Ueda107)</name>
    <name type="common">Pseudomonas fluorescens subsp. cellulosa</name>
    <dbReference type="NCBI Taxonomy" id="498211"/>
    <lineage>
        <taxon>Bacteria</taxon>
        <taxon>Pseudomonadati</taxon>
        <taxon>Pseudomonadota</taxon>
        <taxon>Gammaproteobacteria</taxon>
        <taxon>Cellvibrionales</taxon>
        <taxon>Cellvibrionaceae</taxon>
        <taxon>Cellvibrio</taxon>
    </lineage>
</organism>
<name>CH60_CELJU</name>